<comment type="function">
    <text evidence="10 15 16 22 23">Key regulator of transforming growth factor beta (TGFB1, TGFB2 and TGFB3) that controls TGF-beta activation by maintaining it in a latent state during storage in extracellular space (PubMed:2022183, PubMed:8617200, PubMed:8939931). Associates specifically via disulfide bonds with the Latency-associated peptide (LAP), which is the regulatory chain of TGF-beta, and regulates integrin-dependent activation of TGF-beta (PubMed:15184403, PubMed:8617200, PubMed:8939931). Outcompeted by LRRC32/GARP for binding to LAP regulatory chain of TGF-beta (PubMed:22278742).</text>
</comment>
<comment type="subunit">
    <text evidence="7 8 11 13 14 15 16 19 20 22 23">Interacts with TGFB1; associates via disulfide bonds with the Latency-associated peptide chain (LAP) regulatory chain of TGFB1, leading to regulate activation of TGF-beta-1 (PubMed:10930463, PubMed:15567420, PubMed:2022183, PubMed:22278742, PubMed:8617200, PubMed:8939931). LTBP1 does not bind directly to TGF-beta-1, the active chain of TGFB1 (PubMed:10930463). Interacts (via C-terminal domain) with FBN1 (via N-terminal domain) (PubMed:12429738, PubMed:17293099, PubMed:33991472). Interacts with FBN2 (PubMed:12429738, PubMed:33991472). Interacts with ADAMTSL2 (PubMed:18677313). Interacts with EFEMP2 (PubMed:27339457).</text>
</comment>
<comment type="interaction">
    <interactant intactId="EBI-11173861">
        <id>Q14766-1</id>
    </interactant>
    <interactant intactId="EBI-779636">
        <id>P01137</id>
        <label>TGFB1</label>
    </interactant>
    <organismsDiffer>false</organismsDiffer>
    <experiments>4</experiments>
</comment>
<comment type="interaction">
    <interactant intactId="EBI-11173832">
        <id>Q14766-2</id>
    </interactant>
    <interactant intactId="EBI-2505934">
        <id>P35555</id>
        <label>FBN1</label>
    </interactant>
    <organismsDiffer>false</organismsDiffer>
    <experiments>2</experiments>
</comment>
<comment type="subcellular location">
    <subcellularLocation>
        <location evidence="12">Secreted</location>
    </subcellularLocation>
    <subcellularLocation>
        <location evidence="12 22">Secreted</location>
        <location evidence="12 22">Extracellular space</location>
        <location evidence="12 22">Extracellular matrix</location>
    </subcellularLocation>
</comment>
<comment type="alternative products">
    <event type="alternative splicing"/>
    <isoform>
        <id>Q14766-1</id>
        <name>Long</name>
        <name>LTBP-1L</name>
        <sequence type="displayed"/>
    </isoform>
    <isoform>
        <id>Q14766-2</id>
        <id>P22064-1</id>
        <name>Short</name>
        <name>LTBP-1S</name>
        <sequence type="described" ref="VSP_036963 VSP_036964"/>
    </isoform>
    <isoform>
        <id>Q14766-3</id>
        <name>3</name>
        <sequence type="described" ref="VSP_036963 VSP_036964 VSP_036965"/>
    </isoform>
    <isoform>
        <id>Q14766-4</id>
        <name>4</name>
        <sequence type="described" ref="VSP_040125"/>
    </isoform>
    <isoform>
        <id>Q14766-5</id>
        <name>5</name>
        <sequence type="described" ref="VSP_036963 VSP_036964 VSP_040125"/>
    </isoform>
</comment>
<comment type="tissue specificity">
    <text evidence="13">Expressed in the aorta (at protein level) (PubMed:17293099). Isoform Long: Expressed in fibroblasts (PubMed:17293099).</text>
</comment>
<comment type="domain">
    <text evidence="22 23">The 8-Cys3 region in the third TB domain mediates the interchain disulfide bond interaction with the Latency-associated peptide chain (LAP) regulatory chain of TGFB1.</text>
</comment>
<comment type="PTM">
    <text evidence="17">Contains hydroxylated asparagine residues.</text>
</comment>
<comment type="PTM">
    <text evidence="17">Isoform Short N-terminus is blocked.</text>
</comment>
<comment type="PTM">
    <text evidence="9">Two intrachain disulfide bonds from the TB3 domain are rearranged upon TGFB1 binding, and form interchain bonds with TGFB1 propeptide, anchoring it to the extracellular matrix.</text>
</comment>
<comment type="PTM">
    <text evidence="21">O-glycosylated on serine residues by POGLUT2 and POGLUT3.</text>
</comment>
<comment type="disease" evidence="20">
    <disease id="DI-06173">
        <name>Cutis laxa, autosomal recessive, 2E</name>
        <acronym>ARCL2E</acronym>
        <description>A form of cutis laxa, a disorder characterized by an excessive congenital skin wrinkling, a large fontanelle with delayed closure, a typical facial appearance with downslanting palpebral fissures, and a general connective tissue weakness. ARCL2E patients present with cutis laxa, inguinal hernia, craniofacial dysmorphology, variable heart defects, and prominent skeletal features including craniosynostosis, short stature, brachydactyly, and syndactyly.</description>
        <dbReference type="MIM" id="619451"/>
    </disease>
    <text>The disease is caused by variants affecting the gene represented in this entry.</text>
</comment>
<comment type="similarity">
    <text evidence="30">Belongs to the LTBP family.</text>
</comment>
<comment type="sequence caution" evidence="30">
    <conflict type="erroneous initiation">
        <sequence resource="EMBL-CDS" id="BAD92038"/>
    </conflict>
    <text>Extended N-terminus.</text>
</comment>
<dbReference type="EMBL" id="M34057">
    <property type="protein sequence ID" value="AAA61160.1"/>
    <property type="molecule type" value="mRNA"/>
</dbReference>
<dbReference type="EMBL" id="AF489528">
    <property type="protein sequence ID" value="AAM03124.1"/>
    <property type="molecule type" value="mRNA"/>
</dbReference>
<dbReference type="EMBL" id="AB208801">
    <property type="protein sequence ID" value="BAD92038.1"/>
    <property type="status" value="ALT_INIT"/>
    <property type="molecule type" value="mRNA"/>
</dbReference>
<dbReference type="EMBL" id="AC019195">
    <property type="protein sequence ID" value="AAY14953.1"/>
    <property type="molecule type" value="Genomic_DNA"/>
</dbReference>
<dbReference type="EMBL" id="AC019127">
    <property type="protein sequence ID" value="AAY24260.1"/>
    <property type="molecule type" value="Genomic_DNA"/>
</dbReference>
<dbReference type="EMBL" id="AC020594">
    <property type="protein sequence ID" value="AAY15036.1"/>
    <property type="molecule type" value="Genomic_DNA"/>
</dbReference>
<dbReference type="EMBL" id="CH471053">
    <property type="protein sequence ID" value="EAX00437.1"/>
    <property type="molecule type" value="Genomic_DNA"/>
</dbReference>
<dbReference type="EMBL" id="BC130289">
    <property type="protein sequence ID" value="AAI30290.1"/>
    <property type="molecule type" value="mRNA"/>
</dbReference>
<dbReference type="EMBL" id="L48925">
    <property type="protein sequence ID" value="AAA96327.1"/>
    <property type="molecule type" value="Genomic_DNA"/>
</dbReference>
<dbReference type="EMBL" id="BP291349">
    <property type="status" value="NOT_ANNOTATED_CDS"/>
    <property type="molecule type" value="mRNA"/>
</dbReference>
<dbReference type="CCDS" id="CCDS33177.2">
    <molecule id="Q14766-1"/>
</dbReference>
<dbReference type="CCDS" id="CCDS33178.2">
    <molecule id="Q14766-2"/>
</dbReference>
<dbReference type="CCDS" id="CCDS54345.1">
    <molecule id="Q14766-3"/>
</dbReference>
<dbReference type="PIR" id="A35626">
    <property type="entry name" value="A35626"/>
</dbReference>
<dbReference type="RefSeq" id="NP_000618.3">
    <molecule id="Q14766-2"/>
    <property type="nucleotide sequence ID" value="NM_000627.3"/>
</dbReference>
<dbReference type="RefSeq" id="NP_001159736.1">
    <property type="nucleotide sequence ID" value="NM_001166264.1"/>
</dbReference>
<dbReference type="RefSeq" id="NP_001159737.2">
    <molecule id="Q14766-3"/>
    <property type="nucleotide sequence ID" value="NM_001166265.2"/>
</dbReference>
<dbReference type="RefSeq" id="NP_001159738.1">
    <property type="nucleotide sequence ID" value="NM_001166266.1"/>
</dbReference>
<dbReference type="RefSeq" id="NP_996826.3">
    <molecule id="Q14766-1"/>
    <property type="nucleotide sequence ID" value="NM_206943.4"/>
</dbReference>
<dbReference type="RefSeq" id="XP_011531155.1">
    <molecule id="Q14766-4"/>
    <property type="nucleotide sequence ID" value="XM_011532853.3"/>
</dbReference>
<dbReference type="PDB" id="1KSQ">
    <property type="method" value="NMR"/>
    <property type="chains" value="A=1340-1412"/>
</dbReference>
<dbReference type="PDBsum" id="1KSQ"/>
<dbReference type="SASBDB" id="Q14766"/>
<dbReference type="SMR" id="Q14766"/>
<dbReference type="BioGRID" id="110230">
    <property type="interactions" value="81"/>
</dbReference>
<dbReference type="DIP" id="DIP-50011N"/>
<dbReference type="FunCoup" id="Q14766">
    <property type="interactions" value="901"/>
</dbReference>
<dbReference type="IntAct" id="Q14766">
    <property type="interactions" value="60"/>
</dbReference>
<dbReference type="MINT" id="Q14766"/>
<dbReference type="STRING" id="9606.ENSP00000386043"/>
<dbReference type="TCDB" id="9.B.87.1.37">
    <property type="family name" value="the selenoprotein p receptor (selp-receptor) family"/>
</dbReference>
<dbReference type="GlyConnect" id="329">
    <property type="glycosylation" value="37 N-Linked glycans (5 sites)"/>
</dbReference>
<dbReference type="GlyCosmos" id="Q14766">
    <property type="glycosylation" value="31 sites, 57 glycans"/>
</dbReference>
<dbReference type="GlyGen" id="Q14766">
    <property type="glycosylation" value="54 sites, 65 N-linked glycans (6 sites), 9 O-linked glycans (36 sites)"/>
</dbReference>
<dbReference type="iPTMnet" id="Q14766"/>
<dbReference type="PhosphoSitePlus" id="Q14766"/>
<dbReference type="BioMuta" id="LTBP1"/>
<dbReference type="DMDM" id="290457687"/>
<dbReference type="jPOST" id="Q14766"/>
<dbReference type="MassIVE" id="Q14766"/>
<dbReference type="PaxDb" id="9606-ENSP00000386043"/>
<dbReference type="PeptideAtlas" id="Q14766"/>
<dbReference type="ProteomicsDB" id="60159">
    <molecule id="Q14766-1"/>
</dbReference>
<dbReference type="ProteomicsDB" id="60160">
    <molecule id="Q14766-2"/>
</dbReference>
<dbReference type="ProteomicsDB" id="60161">
    <molecule id="Q14766-3"/>
</dbReference>
<dbReference type="ProteomicsDB" id="60162">
    <molecule id="Q14766-4"/>
</dbReference>
<dbReference type="ProteomicsDB" id="60163">
    <molecule id="Q14766-5"/>
</dbReference>
<dbReference type="Pumba" id="Q14766"/>
<dbReference type="Antibodypedia" id="1284">
    <property type="antibodies" value="210 antibodies from 31 providers"/>
</dbReference>
<dbReference type="DNASU" id="4052"/>
<dbReference type="Ensembl" id="ENST00000404525.5">
    <molecule id="Q14766-3"/>
    <property type="protein sequence ID" value="ENSP00000385359.1"/>
    <property type="gene ID" value="ENSG00000049323.16"/>
</dbReference>
<dbReference type="Ensembl" id="ENST00000404816.7">
    <molecule id="Q14766-1"/>
    <property type="protein sequence ID" value="ENSP00000386043.2"/>
    <property type="gene ID" value="ENSG00000049323.16"/>
</dbReference>
<dbReference type="Ensembl" id="ENST00000407925.5">
    <molecule id="Q14766-2"/>
    <property type="protein sequence ID" value="ENSP00000384091.1"/>
    <property type="gene ID" value="ENSG00000049323.16"/>
</dbReference>
<dbReference type="GeneID" id="4052"/>
<dbReference type="KEGG" id="hsa:4052"/>
<dbReference type="MANE-Select" id="ENST00000404816.7">
    <property type="protein sequence ID" value="ENSP00000386043.2"/>
    <property type="RefSeq nucleotide sequence ID" value="NM_206943.4"/>
    <property type="RefSeq protein sequence ID" value="NP_996826.3"/>
</dbReference>
<dbReference type="UCSC" id="uc002rou.4">
    <molecule id="Q14766-1"/>
    <property type="organism name" value="human"/>
</dbReference>
<dbReference type="AGR" id="HGNC:6714"/>
<dbReference type="CTD" id="4052"/>
<dbReference type="DisGeNET" id="4052"/>
<dbReference type="GeneCards" id="LTBP1"/>
<dbReference type="HGNC" id="HGNC:6714">
    <property type="gene designation" value="LTBP1"/>
</dbReference>
<dbReference type="HPA" id="ENSG00000049323">
    <property type="expression patterns" value="Tissue enhanced (cervix)"/>
</dbReference>
<dbReference type="MalaCards" id="LTBP1"/>
<dbReference type="MIM" id="150390">
    <property type="type" value="gene"/>
</dbReference>
<dbReference type="MIM" id="619451">
    <property type="type" value="phenotype"/>
</dbReference>
<dbReference type="neXtProt" id="NX_Q14766"/>
<dbReference type="OpenTargets" id="ENSG00000049323"/>
<dbReference type="Orphanet" id="90349">
    <property type="disease" value="Autosomal recessive cutis laxa type 1"/>
</dbReference>
<dbReference type="PharmGKB" id="PA30477"/>
<dbReference type="VEuPathDB" id="HostDB:ENSG00000049323"/>
<dbReference type="eggNOG" id="KOG1217">
    <property type="taxonomic scope" value="Eukaryota"/>
</dbReference>
<dbReference type="GeneTree" id="ENSGT00940000155823"/>
<dbReference type="InParanoid" id="Q14766"/>
<dbReference type="OMA" id="SQRCTKX"/>
<dbReference type="OrthoDB" id="4062651at2759"/>
<dbReference type="PAN-GO" id="Q14766">
    <property type="GO annotations" value="1 GO annotation based on evolutionary models"/>
</dbReference>
<dbReference type="PhylomeDB" id="Q14766"/>
<dbReference type="TreeFam" id="TF317514"/>
<dbReference type="PathwayCommons" id="Q14766"/>
<dbReference type="Reactome" id="R-HSA-2129379">
    <property type="pathway name" value="Molecules associated with elastic fibres"/>
</dbReference>
<dbReference type="Reactome" id="R-HSA-2173789">
    <property type="pathway name" value="TGF-beta receptor signaling activates SMADs"/>
</dbReference>
<dbReference type="Reactome" id="R-HSA-381426">
    <property type="pathway name" value="Regulation of Insulin-like Growth Factor (IGF) transport and uptake by Insulin-like Growth Factor Binding Proteins (IGFBPs)"/>
</dbReference>
<dbReference type="Reactome" id="R-HSA-8957275">
    <property type="pathway name" value="Post-translational protein phosphorylation"/>
</dbReference>
<dbReference type="SignaLink" id="Q14766"/>
<dbReference type="SIGNOR" id="Q14766"/>
<dbReference type="BioGRID-ORCS" id="4052">
    <property type="hits" value="14 hits in 1154 CRISPR screens"/>
</dbReference>
<dbReference type="ChiTaRS" id="LTBP1">
    <property type="organism name" value="human"/>
</dbReference>
<dbReference type="EvolutionaryTrace" id="Q14766"/>
<dbReference type="GeneWiki" id="LTBP1_(gene)"/>
<dbReference type="GenomeRNAi" id="4052"/>
<dbReference type="Pharos" id="Q14766">
    <property type="development level" value="Tbio"/>
</dbReference>
<dbReference type="PRO" id="PR:Q14766"/>
<dbReference type="Proteomes" id="UP000005640">
    <property type="component" value="Chromosome 2"/>
</dbReference>
<dbReference type="RNAct" id="Q14766">
    <property type="molecule type" value="protein"/>
</dbReference>
<dbReference type="Bgee" id="ENSG00000049323">
    <property type="expression patterns" value="Expressed in blood vessel layer and 209 other cell types or tissues"/>
</dbReference>
<dbReference type="ExpressionAtlas" id="Q14766">
    <property type="expression patterns" value="baseline and differential"/>
</dbReference>
<dbReference type="GO" id="GO:0062023">
    <property type="term" value="C:collagen-containing extracellular matrix"/>
    <property type="evidence" value="ECO:0000314"/>
    <property type="project" value="UniProtKB"/>
</dbReference>
<dbReference type="GO" id="GO:0005788">
    <property type="term" value="C:endoplasmic reticulum lumen"/>
    <property type="evidence" value="ECO:0000304"/>
    <property type="project" value="Reactome"/>
</dbReference>
<dbReference type="GO" id="GO:0031012">
    <property type="term" value="C:extracellular matrix"/>
    <property type="evidence" value="ECO:0000314"/>
    <property type="project" value="UniProtKB"/>
</dbReference>
<dbReference type="GO" id="GO:0005576">
    <property type="term" value="C:extracellular region"/>
    <property type="evidence" value="ECO:0007005"/>
    <property type="project" value="BHF-UCL"/>
</dbReference>
<dbReference type="GO" id="GO:0001527">
    <property type="term" value="C:microfibril"/>
    <property type="evidence" value="ECO:0000314"/>
    <property type="project" value="AgBase"/>
</dbReference>
<dbReference type="GO" id="GO:0032991">
    <property type="term" value="C:protein-containing complex"/>
    <property type="evidence" value="ECO:0000314"/>
    <property type="project" value="AgBase"/>
</dbReference>
<dbReference type="GO" id="GO:0005509">
    <property type="term" value="F:calcium ion binding"/>
    <property type="evidence" value="ECO:0007669"/>
    <property type="project" value="InterPro"/>
</dbReference>
<dbReference type="GO" id="GO:0050436">
    <property type="term" value="F:microfibril binding"/>
    <property type="evidence" value="ECO:0000314"/>
    <property type="project" value="AgBase"/>
</dbReference>
<dbReference type="GO" id="GO:0060090">
    <property type="term" value="F:molecular adaptor activity"/>
    <property type="evidence" value="ECO:0000269"/>
    <property type="project" value="DisProt"/>
</dbReference>
<dbReference type="GO" id="GO:0141069">
    <property type="term" value="F:receptor ligand inhibitor activity"/>
    <property type="evidence" value="ECO:0000314"/>
    <property type="project" value="UniProtKB"/>
</dbReference>
<dbReference type="GO" id="GO:0050431">
    <property type="term" value="F:transforming growth factor beta binding"/>
    <property type="evidence" value="ECO:0000353"/>
    <property type="project" value="UniProtKB"/>
</dbReference>
<dbReference type="GO" id="GO:0005024">
    <property type="term" value="F:transforming growth factor beta receptor activity"/>
    <property type="evidence" value="ECO:0000303"/>
    <property type="project" value="UniProtKB"/>
</dbReference>
<dbReference type="GO" id="GO:0035592">
    <property type="term" value="P:establishment of protein localization to extracellular region"/>
    <property type="evidence" value="ECO:0000314"/>
    <property type="project" value="UniProtKB"/>
</dbReference>
<dbReference type="GO" id="GO:0035583">
    <property type="term" value="P:sequestering of TGFbeta in extracellular matrix"/>
    <property type="evidence" value="ECO:0000314"/>
    <property type="project" value="UniProtKB"/>
</dbReference>
<dbReference type="CDD" id="cd00054">
    <property type="entry name" value="EGF_CA"/>
    <property type="match status" value="12"/>
</dbReference>
<dbReference type="FunFam" id="2.10.25.10:FF:000198">
    <property type="entry name" value="latent-transforming growth factor beta-binding protein 1 isoform X1"/>
    <property type="match status" value="1"/>
</dbReference>
<dbReference type="FunFam" id="2.10.25.10:FF:000205">
    <property type="entry name" value="latent-transforming growth factor beta-binding protein 1 isoform X1"/>
    <property type="match status" value="1"/>
</dbReference>
<dbReference type="FunFam" id="3.90.290.10:FF:000004">
    <property type="entry name" value="latent-transforming growth factor beta-binding protein 1 isoform X1"/>
    <property type="match status" value="1"/>
</dbReference>
<dbReference type="FunFam" id="2.10.25.10:FF:000046">
    <property type="entry name" value="Latent-transforming growth factor beta-binding protein 1 isoform x2"/>
    <property type="match status" value="1"/>
</dbReference>
<dbReference type="FunFam" id="2.10.25.10:FF:000019">
    <property type="entry name" value="latent-transforming growth factor beta-binding protein 1 isoform X2"/>
    <property type="match status" value="6"/>
</dbReference>
<dbReference type="FunFam" id="3.90.290.10:FF:000012">
    <property type="entry name" value="latent-transforming growth factor beta-binding protein 1 isoform X2"/>
    <property type="match status" value="1"/>
</dbReference>
<dbReference type="FunFam" id="2.10.25.10:FF:000475">
    <property type="entry name" value="latent-transforming growth factor beta-binding protein 1 isoform X3"/>
    <property type="match status" value="1"/>
</dbReference>
<dbReference type="FunFam" id="2.10.25.10:FF:000515">
    <property type="entry name" value="latent-transforming growth factor beta-binding protein 1 isoform X6"/>
    <property type="match status" value="1"/>
</dbReference>
<dbReference type="FunFam" id="2.10.25.10:FF:000014">
    <property type="entry name" value="Latent-transforming growth factor beta-binding protein 3"/>
    <property type="match status" value="1"/>
</dbReference>
<dbReference type="FunFam" id="2.10.25.10:FF:000077">
    <property type="entry name" value="Latent-transforming growth factor beta-binding protein 3 isoform 1"/>
    <property type="match status" value="1"/>
</dbReference>
<dbReference type="FunFam" id="3.90.290.10:FF:000001">
    <property type="entry name" value="Latent-transforming growth factor beta-binding protein 3 isoform 1"/>
    <property type="match status" value="1"/>
</dbReference>
<dbReference type="FunFam" id="3.90.290.10:FF:000002">
    <property type="entry name" value="Latent-transforming growth factor beta-binding protein 3 isoform 1"/>
    <property type="match status" value="1"/>
</dbReference>
<dbReference type="FunFam" id="2.10.25.10:FF:000056">
    <property type="entry name" value="Latent-transforming growth factor beta-binding protein 3 isoform 2"/>
    <property type="match status" value="1"/>
</dbReference>
<dbReference type="FunFam" id="2.10.25.10:FF:000115">
    <property type="entry name" value="latent-transforming growth factor beta-binding protein 4 isoform X2"/>
    <property type="match status" value="1"/>
</dbReference>
<dbReference type="FunFam" id="2.10.25.10:FF:000273">
    <property type="entry name" value="Putative latent-transforming growth factor beta-binding protein 2"/>
    <property type="match status" value="1"/>
</dbReference>
<dbReference type="Gene3D" id="2.10.25.10">
    <property type="entry name" value="Laminin"/>
    <property type="match status" value="18"/>
</dbReference>
<dbReference type="Gene3D" id="3.90.290.10">
    <property type="entry name" value="TGF-beta binding (TB) domain"/>
    <property type="match status" value="4"/>
</dbReference>
<dbReference type="InterPro" id="IPR026823">
    <property type="entry name" value="cEGF"/>
</dbReference>
<dbReference type="InterPro" id="IPR050751">
    <property type="entry name" value="ECM_structural_protein"/>
</dbReference>
<dbReference type="InterPro" id="IPR001881">
    <property type="entry name" value="EGF-like_Ca-bd_dom"/>
</dbReference>
<dbReference type="InterPro" id="IPR000742">
    <property type="entry name" value="EGF-like_dom"/>
</dbReference>
<dbReference type="InterPro" id="IPR000152">
    <property type="entry name" value="EGF-type_Asp/Asn_hydroxyl_site"/>
</dbReference>
<dbReference type="InterPro" id="IPR018097">
    <property type="entry name" value="EGF_Ca-bd_CS"/>
</dbReference>
<dbReference type="InterPro" id="IPR009030">
    <property type="entry name" value="Growth_fac_rcpt_cys_sf"/>
</dbReference>
<dbReference type="InterPro" id="IPR049883">
    <property type="entry name" value="NOTCH1_EGF-like"/>
</dbReference>
<dbReference type="InterPro" id="IPR017878">
    <property type="entry name" value="TB_dom"/>
</dbReference>
<dbReference type="InterPro" id="IPR036773">
    <property type="entry name" value="TB_dom_sf"/>
</dbReference>
<dbReference type="PANTHER" id="PTHR24034">
    <property type="entry name" value="EGF-LIKE DOMAIN-CONTAINING PROTEIN"/>
    <property type="match status" value="1"/>
</dbReference>
<dbReference type="PANTHER" id="PTHR24034:SF140">
    <property type="entry name" value="LATENT-TRANSFORMING GROWTH FACTOR BETA-BINDING PROTEIN 1"/>
    <property type="match status" value="1"/>
</dbReference>
<dbReference type="Pfam" id="PF12662">
    <property type="entry name" value="cEGF"/>
    <property type="match status" value="3"/>
</dbReference>
<dbReference type="Pfam" id="PF07645">
    <property type="entry name" value="EGF_CA"/>
    <property type="match status" value="10"/>
</dbReference>
<dbReference type="Pfam" id="PF00683">
    <property type="entry name" value="TB"/>
    <property type="match status" value="4"/>
</dbReference>
<dbReference type="SMART" id="SM00181">
    <property type="entry name" value="EGF"/>
    <property type="match status" value="18"/>
</dbReference>
<dbReference type="SMART" id="SM00179">
    <property type="entry name" value="EGF_CA"/>
    <property type="match status" value="16"/>
</dbReference>
<dbReference type="SUPFAM" id="SSF57196">
    <property type="entry name" value="EGF/Laminin"/>
    <property type="match status" value="5"/>
</dbReference>
<dbReference type="SUPFAM" id="SSF57184">
    <property type="entry name" value="Growth factor receptor domain"/>
    <property type="match status" value="5"/>
</dbReference>
<dbReference type="SUPFAM" id="SSF57581">
    <property type="entry name" value="TB module/8-cys domain"/>
    <property type="match status" value="4"/>
</dbReference>
<dbReference type="PROSITE" id="PS00010">
    <property type="entry name" value="ASX_HYDROXYL"/>
    <property type="match status" value="13"/>
</dbReference>
<dbReference type="PROSITE" id="PS00022">
    <property type="entry name" value="EGF_1"/>
    <property type="match status" value="2"/>
</dbReference>
<dbReference type="PROSITE" id="PS01186">
    <property type="entry name" value="EGF_2"/>
    <property type="match status" value="11"/>
</dbReference>
<dbReference type="PROSITE" id="PS50026">
    <property type="entry name" value="EGF_3"/>
    <property type="match status" value="14"/>
</dbReference>
<dbReference type="PROSITE" id="PS01187">
    <property type="entry name" value="EGF_CA"/>
    <property type="match status" value="15"/>
</dbReference>
<dbReference type="PROSITE" id="PS51364">
    <property type="entry name" value="TB"/>
    <property type="match status" value="4"/>
</dbReference>
<protein>
    <recommendedName>
        <fullName evidence="26">Latent-transforming growth factor beta-binding protein 1</fullName>
        <shortName evidence="26">LTBP-1</shortName>
    </recommendedName>
    <alternativeName>
        <fullName evidence="25">Transforming growth factor beta-1-binding protein 1</fullName>
        <shortName evidence="25">TGF-beta1-BP-1</shortName>
    </alternativeName>
</protein>
<keyword id="KW-0002">3D-structure</keyword>
<keyword id="KW-0025">Alternative splicing</keyword>
<keyword id="KW-0903">Direct protein sequencing</keyword>
<keyword id="KW-0225">Disease variant</keyword>
<keyword id="KW-1015">Disulfide bond</keyword>
<keyword id="KW-0245">EGF-like domain</keyword>
<keyword id="KW-0272">Extracellular matrix</keyword>
<keyword id="KW-0325">Glycoprotein</keyword>
<keyword id="KW-0340">Growth factor binding</keyword>
<keyword id="KW-0379">Hydroxylation</keyword>
<keyword id="KW-0597">Phosphoprotein</keyword>
<keyword id="KW-1267">Proteomics identification</keyword>
<keyword id="KW-1185">Reference proteome</keyword>
<keyword id="KW-0677">Repeat</keyword>
<keyword id="KW-0964">Secreted</keyword>
<keyword id="KW-0732">Signal</keyword>
<proteinExistence type="evidence at protein level"/>
<gene>
    <name evidence="32" type="primary">LTBP1</name>
</gene>
<reference key="1">
    <citation type="journal article" date="1990" name="Cell">
        <title>TGF-beta 1 binding protein: a component of the large latent complex of TGF-beta 1 with multiple repeat sequences.</title>
        <authorList>
            <person name="Kanzaki T."/>
            <person name="Olofsson A."/>
            <person name="Moren A."/>
            <person name="Wernstedt C."/>
            <person name="Hellman U."/>
            <person name="Miyazono K."/>
            <person name="Claesson-Welsh L."/>
            <person name="Heldin C.-H."/>
        </authorList>
    </citation>
    <scope>NUCLEOTIDE SEQUENCE [MRNA] (ISOFORM SHORT)</scope>
    <scope>PARTIAL PROTEIN SEQUENCE</scope>
    <scope>HYDROXYLATION AT ASN-974 AND ASN-1137</scope>
    <source>
        <tissue>Fibroblast</tissue>
        <tissue>Platelet</tissue>
    </source>
</reference>
<reference key="2">
    <citation type="submission" date="2002-02" db="EMBL/GenBank/DDBJ databases">
        <title>Major alternative spliced-form of LTBP1 mRNA in human glomerular endothelial cell.</title>
        <authorList>
            <person name="Kwak J.H."/>
            <person name="Shin K.Y."/>
            <person name="Kim S.I."/>
        </authorList>
    </citation>
    <scope>NUCLEOTIDE SEQUENCE [MRNA] (ISOFORM SHORT)</scope>
</reference>
<reference key="3">
    <citation type="submission" date="2005-03" db="EMBL/GenBank/DDBJ databases">
        <authorList>
            <person name="Totoki Y."/>
            <person name="Toyoda A."/>
            <person name="Takeda T."/>
            <person name="Sakaki Y."/>
            <person name="Tanaka A."/>
            <person name="Yokoyama S."/>
            <person name="Ohara O."/>
            <person name="Nagase T."/>
            <person name="Kikuno R.F."/>
        </authorList>
    </citation>
    <scope>NUCLEOTIDE SEQUENCE [LARGE SCALE MRNA] (ISOFORM 3)</scope>
    <source>
        <tissue>Brain</tissue>
    </source>
</reference>
<reference key="4">
    <citation type="journal article" date="2005" name="Nature">
        <title>Generation and annotation of the DNA sequences of human chromosomes 2 and 4.</title>
        <authorList>
            <person name="Hillier L.W."/>
            <person name="Graves T.A."/>
            <person name="Fulton R.S."/>
            <person name="Fulton L.A."/>
            <person name="Pepin K.H."/>
            <person name="Minx P."/>
            <person name="Wagner-McPherson C."/>
            <person name="Layman D."/>
            <person name="Wylie K."/>
            <person name="Sekhon M."/>
            <person name="Becker M.C."/>
            <person name="Fewell G.A."/>
            <person name="Delehaunty K.D."/>
            <person name="Miner T.L."/>
            <person name="Nash W.E."/>
            <person name="Kremitzki C."/>
            <person name="Oddy L."/>
            <person name="Du H."/>
            <person name="Sun H."/>
            <person name="Bradshaw-Cordum H."/>
            <person name="Ali J."/>
            <person name="Carter J."/>
            <person name="Cordes M."/>
            <person name="Harris A."/>
            <person name="Isak A."/>
            <person name="van Brunt A."/>
            <person name="Nguyen C."/>
            <person name="Du F."/>
            <person name="Courtney L."/>
            <person name="Kalicki J."/>
            <person name="Ozersky P."/>
            <person name="Abbott S."/>
            <person name="Armstrong J."/>
            <person name="Belter E.A."/>
            <person name="Caruso L."/>
            <person name="Cedroni M."/>
            <person name="Cotton M."/>
            <person name="Davidson T."/>
            <person name="Desai A."/>
            <person name="Elliott G."/>
            <person name="Erb T."/>
            <person name="Fronick C."/>
            <person name="Gaige T."/>
            <person name="Haakenson W."/>
            <person name="Haglund K."/>
            <person name="Holmes A."/>
            <person name="Harkins R."/>
            <person name="Kim K."/>
            <person name="Kruchowski S.S."/>
            <person name="Strong C.M."/>
            <person name="Grewal N."/>
            <person name="Goyea E."/>
            <person name="Hou S."/>
            <person name="Levy A."/>
            <person name="Martinka S."/>
            <person name="Mead K."/>
            <person name="McLellan M.D."/>
            <person name="Meyer R."/>
            <person name="Randall-Maher J."/>
            <person name="Tomlinson C."/>
            <person name="Dauphin-Kohlberg S."/>
            <person name="Kozlowicz-Reilly A."/>
            <person name="Shah N."/>
            <person name="Swearengen-Shahid S."/>
            <person name="Snider J."/>
            <person name="Strong J.T."/>
            <person name="Thompson J."/>
            <person name="Yoakum M."/>
            <person name="Leonard S."/>
            <person name="Pearman C."/>
            <person name="Trani L."/>
            <person name="Radionenko M."/>
            <person name="Waligorski J.E."/>
            <person name="Wang C."/>
            <person name="Rock S.M."/>
            <person name="Tin-Wollam A.-M."/>
            <person name="Maupin R."/>
            <person name="Latreille P."/>
            <person name="Wendl M.C."/>
            <person name="Yang S.-P."/>
            <person name="Pohl C."/>
            <person name="Wallis J.W."/>
            <person name="Spieth J."/>
            <person name="Bieri T.A."/>
            <person name="Berkowicz N."/>
            <person name="Nelson J.O."/>
            <person name="Osborne J."/>
            <person name="Ding L."/>
            <person name="Meyer R."/>
            <person name="Sabo A."/>
            <person name="Shotland Y."/>
            <person name="Sinha P."/>
            <person name="Wohldmann P.E."/>
            <person name="Cook L.L."/>
            <person name="Hickenbotham M.T."/>
            <person name="Eldred J."/>
            <person name="Williams D."/>
            <person name="Jones T.A."/>
            <person name="She X."/>
            <person name="Ciccarelli F.D."/>
            <person name="Izaurralde E."/>
            <person name="Taylor J."/>
            <person name="Schmutz J."/>
            <person name="Myers R.M."/>
            <person name="Cox D.R."/>
            <person name="Huang X."/>
            <person name="McPherson J.D."/>
            <person name="Mardis E.R."/>
            <person name="Clifton S.W."/>
            <person name="Warren W.C."/>
            <person name="Chinwalla A.T."/>
            <person name="Eddy S.R."/>
            <person name="Marra M.A."/>
            <person name="Ovcharenko I."/>
            <person name="Furey T.S."/>
            <person name="Miller W."/>
            <person name="Eichler E.E."/>
            <person name="Bork P."/>
            <person name="Suyama M."/>
            <person name="Torrents D."/>
            <person name="Waterston R.H."/>
            <person name="Wilson R.K."/>
        </authorList>
    </citation>
    <scope>NUCLEOTIDE SEQUENCE [LARGE SCALE GENOMIC DNA]</scope>
</reference>
<reference key="5">
    <citation type="submission" date="2005-09" db="EMBL/GenBank/DDBJ databases">
        <authorList>
            <person name="Mural R.J."/>
            <person name="Istrail S."/>
            <person name="Sutton G.G."/>
            <person name="Florea L."/>
            <person name="Halpern A.L."/>
            <person name="Mobarry C.M."/>
            <person name="Lippert R."/>
            <person name="Walenz B."/>
            <person name="Shatkay H."/>
            <person name="Dew I."/>
            <person name="Miller J.R."/>
            <person name="Flanigan M.J."/>
            <person name="Edwards N.J."/>
            <person name="Bolanos R."/>
            <person name="Fasulo D."/>
            <person name="Halldorsson B.V."/>
            <person name="Hannenhalli S."/>
            <person name="Turner R."/>
            <person name="Yooseph S."/>
            <person name="Lu F."/>
            <person name="Nusskern D.R."/>
            <person name="Shue B.C."/>
            <person name="Zheng X.H."/>
            <person name="Zhong F."/>
            <person name="Delcher A.L."/>
            <person name="Huson D.H."/>
            <person name="Kravitz S.A."/>
            <person name="Mouchard L."/>
            <person name="Reinert K."/>
            <person name="Remington K.A."/>
            <person name="Clark A.G."/>
            <person name="Waterman M.S."/>
            <person name="Eichler E.E."/>
            <person name="Adams M.D."/>
            <person name="Hunkapiller M.W."/>
            <person name="Myers E.W."/>
            <person name="Venter J.C."/>
        </authorList>
    </citation>
    <scope>NUCLEOTIDE SEQUENCE [LARGE SCALE GENOMIC DNA]</scope>
</reference>
<reference key="6">
    <citation type="journal article" date="2004" name="Genome Res.">
        <title>The status, quality, and expansion of the NIH full-length cDNA project: the Mammalian Gene Collection (MGC).</title>
        <authorList>
            <consortium name="The MGC Project Team"/>
        </authorList>
    </citation>
    <scope>NUCLEOTIDE SEQUENCE [LARGE SCALE MRNA] (ISOFORM SHORT)</scope>
    <source>
        <tissue>Brain</tissue>
    </source>
</reference>
<reference key="7">
    <citation type="journal article" date="1995" name="J. Biol. Chem.">
        <title>Efficient association of an amino-terminally extended form of human latent transforming growth factor-beta binding protein with the extracellular matrix.</title>
        <authorList>
            <person name="Olofsson A."/>
            <person name="Ichijo H."/>
            <person name="Moren A."/>
            <person name="ten Dijke P."/>
            <person name="Miyazono K."/>
            <person name="Heldin C.-H."/>
        </authorList>
    </citation>
    <scope>NUCLEOTIDE SEQUENCE [GENOMIC DNA] OF 1-346</scope>
    <source>
        <tissue>Blood</tissue>
    </source>
</reference>
<reference key="8">
    <citation type="submission" date="2003-05" db="EMBL/GenBank/DDBJ databases">
        <authorList>
            <person name="Suzuki Y."/>
            <person name="Yamashita R."/>
            <person name="Shirota M."/>
            <person name="Sakakibara Y."/>
            <person name="Chiba J."/>
            <person name="Nakai K."/>
            <person name="Sugano S."/>
        </authorList>
    </citation>
    <scope>NUCLEOTIDE SEQUENCE [LARGE SCALE MRNA] OF 684-875 (ISOFORMS 4 AND 5)</scope>
</reference>
<reference key="9">
    <citation type="journal article" date="1991" name="EMBO J.">
        <title>A role of the latent TGF-beta 1-binding protein in the assembly and secretion of TGF-beta 1.</title>
        <authorList>
            <person name="Miyazono K."/>
            <person name="Olofsson A."/>
            <person name="Colosetti P."/>
            <person name="Heldin C.H."/>
        </authorList>
    </citation>
    <scope>FUNCTION</scope>
    <scope>INTERACTION WITH TGFB1</scope>
</reference>
<reference key="10">
    <citation type="journal article" date="1996" name="EMBO J.">
        <title>Association of the small latent transforming growth factor-beta with an eight cysteine repeat of its binding protein LTBP-1.</title>
        <authorList>
            <person name="Saharinen J."/>
            <person name="Taipale J."/>
            <person name="Keski-Oja J."/>
        </authorList>
    </citation>
    <scope>FUNCTION</scope>
    <scope>INTERACTION WITH TGFB1</scope>
    <scope>DOMAIN</scope>
    <scope>SUBCELLULAR LOCATION</scope>
    <scope>GLYCOSYLATION AT ASN-1366</scope>
    <scope>DISULFIDE BOND</scope>
    <scope>MUTAGENESIS OF ASN-1366</scope>
</reference>
<reference key="11">
    <citation type="journal article" date="1996" name="J. Biol. Chem.">
        <title>Identification and characterization of an eight-cysteine repeat of the latent transforming growth factor-beta binding protein-1 that mediates bonding to the latent transforming growth factor-beta1.</title>
        <authorList>
            <person name="Gleizes P.E."/>
            <person name="Beavis R.C."/>
            <person name="Mazzieri R."/>
            <person name="Shen B."/>
            <person name="Rifkin D.B."/>
        </authorList>
    </citation>
    <scope>FUNCTION</scope>
    <scope>INTERACTION WITH TGFB1</scope>
    <scope>DOMAIN</scope>
    <scope>GLYCOSYLATION AT ASN-1366</scope>
    <scope>DISULFIDE BOND</scope>
    <scope>MUTAGENESIS OF ASN-1366</scope>
</reference>
<reference key="12">
    <citation type="journal article" date="1999" name="Cytokine Growth Factor Rev.">
        <title>Latent transforming growth factor-beta binding proteins (LTBPs) -- structural extracellular matrix proteins for targeting TGF-beta action.</title>
        <authorList>
            <person name="Saharinen J."/>
            <person name="Hyytiainen M."/>
            <person name="Taipale J."/>
            <person name="Keski-Oja J."/>
        </authorList>
    </citation>
    <scope>REVIEW</scope>
</reference>
<reference key="13">
    <citation type="journal article" date="2000" name="Biochem. J.">
        <title>The latent transforming growth factor beta binding protein (LTBP) family.</title>
        <authorList>
            <person name="Oklu R."/>
            <person name="Hesketh R."/>
        </authorList>
    </citation>
    <scope>REVIEW</scope>
</reference>
<reference key="14">
    <citation type="journal article" date="2000" name="Biochemistry">
        <title>Hybrid and complex glycans are linked to the conserved N-glycosylation site of the third eight-cysteine domain of LTBP-1 in insect cells.</title>
        <authorList>
            <person name="Rudd P.M."/>
            <person name="Downing A.K."/>
            <person name="Cadene M."/>
            <person name="Harvey D.J."/>
            <person name="Wormald M.R."/>
            <person name="Weir I."/>
            <person name="Dwek R.A."/>
            <person name="Rifkin D.B."/>
            <person name="Gleizes P.E."/>
        </authorList>
    </citation>
    <scope>GLYCOSYLATION AT ASN-1366</scope>
</reference>
<reference key="15">
    <citation type="journal article" date="2000" name="Mol. Biol. Cell">
        <title>Specific sequence motif of 8-Cys repeats of TGF-beta binding proteins, LTBPs, creates a hydrophobic interaction surface for binding of small latent TGF-beta.</title>
        <authorList>
            <person name="Saharinen J."/>
            <person name="Keski-Oja J."/>
        </authorList>
    </citation>
    <scope>INTERACTION WITH TGFB1</scope>
    <scope>MUTAGENESIS OF 1385-GLU--PRO-1388</scope>
</reference>
<reference key="16">
    <citation type="journal article" date="2003" name="J. Biol. Chem.">
        <title>Latent transforming growth factor beta-binding protein 1 interacts with fibrillin and is a microfibril-associated protein.</title>
        <authorList>
            <person name="Isogai Z."/>
            <person name="Ono R.N."/>
            <person name="Ushiro S."/>
            <person name="Keene D.R."/>
            <person name="Chen Y."/>
            <person name="Mazzieri R."/>
            <person name="Charbonneau N.L."/>
            <person name="Reinhardt D.P."/>
            <person name="Rifkin D.B."/>
            <person name="Sakai L.Y."/>
        </authorList>
    </citation>
    <scope>INTERACTION WITH FBN1 AND FBN2</scope>
</reference>
<reference key="17">
    <citation type="journal article" date="2004" name="J. Cell Biol.">
        <title>Integrin alphaVbeta6-mediated activation of latent TGF-beta requires the latent TGF-beta binding protein-1.</title>
        <authorList>
            <person name="Annes J.P."/>
            <person name="Chen Y."/>
            <person name="Munger J.S."/>
            <person name="Rifkin D.B."/>
        </authorList>
    </citation>
    <scope>FUNCTION</scope>
</reference>
<reference key="18">
    <citation type="journal article" date="2005" name="Exp. Cell Res.">
        <title>Sequential deposition of latent TGF-beta binding proteins (LTBPs) during formation of the extracellular matrix in human lung fibroblasts.</title>
        <authorList>
            <person name="Koli K."/>
            <person name="Hyytieainen M."/>
            <person name="Ryynanen M.J."/>
            <person name="Keski-Oja J."/>
        </authorList>
    </citation>
    <scope>SUBCELLULAR LOCATION</scope>
</reference>
<reference key="19">
    <citation type="journal article" date="2005" name="J. Mol. Biol.">
        <title>Amino acid requirements for formation of the TGF-beta-latent TGF-beta binding protein complexes.</title>
        <authorList>
            <person name="Chen Y."/>
            <person name="Ali T."/>
            <person name="Todorovic V."/>
            <person name="O'leary J.M."/>
            <person name="Kristina Downing A."/>
            <person name="Rifkin D.B."/>
        </authorList>
    </citation>
    <scope>INTERACTION WITH TGFB1</scope>
    <scope>MUTAGENESIS OF GLU-1348 AND 1382-ASP--GLU-1385</scope>
</reference>
<reference key="20">
    <citation type="journal article" date="2007" name="Matrix Biol.">
        <title>LTBP-2 specifically interacts with the amino-terminal region of fibrillin-1 and competes with LTBP-1 for binding to this microfibrillar protein.</title>
        <authorList>
            <person name="Hirani R."/>
            <person name="Hanssen E."/>
            <person name="Gibson M.A."/>
        </authorList>
    </citation>
    <scope>INTERACTION WITH FBN1</scope>
    <scope>C-TERMINAL REGION DOMAIN</scope>
    <scope>TISSUE SPECIFICITY</scope>
</reference>
<reference key="21">
    <citation type="journal article" date="2008" name="J. Proteome Res.">
        <title>Phosphoproteome of resting human platelets.</title>
        <authorList>
            <person name="Zahedi R.P."/>
            <person name="Lewandrowski U."/>
            <person name="Wiesner J."/>
            <person name="Wortelkamp S."/>
            <person name="Moebius J."/>
            <person name="Schuetz C."/>
            <person name="Walter U."/>
            <person name="Gambaryan S."/>
            <person name="Sickmann A."/>
        </authorList>
    </citation>
    <scope>PHOSPHORYLATION [LARGE SCALE ANALYSIS] AT SER-1597</scope>
    <scope>IDENTIFICATION BY MASS SPECTROMETRY [LARGE SCALE ANALYSIS]</scope>
    <source>
        <tissue>Platelet</tissue>
    </source>
</reference>
<reference key="22">
    <citation type="journal article" date="2008" name="Nat. Genet.">
        <title>ADAMTSL2 mutations in geleophysic dysplasia demonstrate a role for ADAMTS-like proteins in TGF-beta bioavailability regulation.</title>
        <authorList>
            <person name="Le Goff C."/>
            <person name="Morice-Picard F."/>
            <person name="Dagoneau N."/>
            <person name="Wang L.W."/>
            <person name="Perrot C."/>
            <person name="Crow Y.J."/>
            <person name="Bauer F."/>
            <person name="Flori E."/>
            <person name="Prost-Squarcioni C."/>
            <person name="Krakow D."/>
            <person name="Ge G."/>
            <person name="Greenspan D.S."/>
            <person name="Bonnet D."/>
            <person name="Le Merrer M."/>
            <person name="Munnich A."/>
            <person name="Apte S.S."/>
            <person name="Cormier-Daire V."/>
        </authorList>
    </citation>
    <scope>INTERACTION WITH ADAMTSL2</scope>
</reference>
<reference key="23">
    <citation type="journal article" date="2012" name="Mol. Biol. Cell">
        <title>GARP regulates the bioavailability and activation of TGFbeta.</title>
        <authorList>
            <person name="Wang R."/>
            <person name="Zhu J."/>
            <person name="Dong X."/>
            <person name="Shi M."/>
            <person name="Lu C."/>
            <person name="Springer T.A."/>
        </authorList>
    </citation>
    <scope>FUNCTION</scope>
    <scope>INTERACTION WITH TGFB1</scope>
</reference>
<reference key="24">
    <citation type="journal article" date="2014" name="J. Proteomics">
        <title>An enzyme assisted RP-RPLC approach for in-depth analysis of human liver phosphoproteome.</title>
        <authorList>
            <person name="Bian Y."/>
            <person name="Song C."/>
            <person name="Cheng K."/>
            <person name="Dong M."/>
            <person name="Wang F."/>
            <person name="Huang J."/>
            <person name="Sun D."/>
            <person name="Wang L."/>
            <person name="Ye M."/>
            <person name="Zou H."/>
        </authorList>
    </citation>
    <scope>IDENTIFICATION BY MASS SPECTROMETRY [LARGE SCALE ANALYSIS]</scope>
    <source>
        <tissue>Liver</tissue>
    </source>
</reference>
<reference key="25">
    <citation type="journal article" date="2015" name="Cell">
        <title>A single kinase generates the majority of the secreted phosphoproteome.</title>
        <authorList>
            <person name="Tagliabracci V.S."/>
            <person name="Wiley S.E."/>
            <person name="Guo X."/>
            <person name="Kinch L.N."/>
            <person name="Durrant E."/>
            <person name="Wen J."/>
            <person name="Xiao J."/>
            <person name="Cui J."/>
            <person name="Nguyen K.B."/>
            <person name="Engel J.L."/>
            <person name="Coon J.J."/>
            <person name="Grishin N."/>
            <person name="Pinna L.A."/>
            <person name="Pagliarini D.J."/>
            <person name="Dixon J.E."/>
        </authorList>
    </citation>
    <scope>PHOSPHORYLATION AT SER-1414</scope>
</reference>
<reference key="26">
    <citation type="journal article" date="2016" name="Matrix Biol.">
        <title>Functional consequence of fibulin-4 missense mutations associated with vascular and skeletal abnormalities and cutis laxa.</title>
        <authorList>
            <person name="Sasaki T."/>
            <person name="Hanisch F.G."/>
            <person name="Deutzmann R."/>
            <person name="Sakai L.Y."/>
            <person name="Sakuma T."/>
            <person name="Miyamoto T."/>
            <person name="Yamamoto T."/>
            <person name="Hannappel E."/>
            <person name="Chu M.L."/>
            <person name="Lanig H."/>
            <person name="von der Mark K."/>
        </authorList>
    </citation>
    <scope>INTERACTION WITH EFEMP2</scope>
</reference>
<reference key="27">
    <citation type="journal article" date="2021" name="J. Biol. Chem.">
        <title>POGLUT2 and POGLUT3 O-glucosylate multiple EGF repeats in fibrillin-1, -2, and LTBP1 and promote secretion of fibrillin-1.</title>
        <authorList>
            <person name="Williamson D.B."/>
            <person name="Sohn C.J."/>
            <person name="Ito A."/>
            <person name="Haltiwanger R.S."/>
        </authorList>
    </citation>
    <scope>GLYCOSYLATION AT SER-647; SER-937; SER-1019; SER-1059; SER-1141; SER-1224; SER-1488 AND SER-1687</scope>
</reference>
<reference key="28">
    <citation type="journal article" date="2024" name="Mol. Cell. Proteomics">
        <title>Analysis of the Healthy Platelet Proteome Identifies a New Form of Domain-Specific O-Fucosylation.</title>
        <authorList>
            <person name="Houlahan C.B."/>
            <person name="Kong Y."/>
            <person name="Johnston B."/>
            <person name="Cielesh M."/>
            <person name="Chau T.H."/>
            <person name="Fenwick J."/>
            <person name="Coleman P.R."/>
            <person name="Hao H."/>
            <person name="Haltiwanger R.S."/>
            <person name="Thaysen-Andersen M."/>
            <person name="Passam F.H."/>
            <person name="Larance M."/>
        </authorList>
    </citation>
    <scope>GLYCOSYLATION AT THR-769 AND THR-801</scope>
</reference>
<reference key="29">
    <citation type="journal article" date="2003" name="J. Mol. Biol.">
        <title>Solution structure of the third TB domain from LTBP1 provides insight into assembly of the large latent complex that sequesters latent TGF-beta.</title>
        <authorList>
            <person name="Lack J."/>
            <person name="O'Leary J.M."/>
            <person name="Knott V."/>
            <person name="Yuan X."/>
            <person name="Rifkin D.B."/>
            <person name="Handford P.A."/>
            <person name="Downing A.K."/>
        </authorList>
    </citation>
    <scope>STRUCTURE BY NMR OF 1340-1412</scope>
    <scope>DISULFIDE BONDS</scope>
</reference>
<reference key="30">
    <citation type="journal article" date="2021" name="Am. J. Hum. Genet.">
        <title>Bi-allelic premature truncating variants in LTBP1 cause cutis laxa syndrome.</title>
        <authorList>
            <person name="Pottie L."/>
            <person name="Adamo C.S."/>
            <person name="Beyens A."/>
            <person name="Luetke S."/>
            <person name="Tapaneeyaphan P."/>
            <person name="De Clercq A."/>
            <person name="Salmon P.L."/>
            <person name="De Rycke R."/>
            <person name="Gezdirici A."/>
            <person name="Gulec E.Y."/>
            <person name="Khan N."/>
            <person name="Urquhart J.E."/>
            <person name="Newman W.G."/>
            <person name="Metcalfe K."/>
            <person name="Efthymiou S."/>
            <person name="Maroofian R."/>
            <person name="Anwar N."/>
            <person name="Maqbool S."/>
            <person name="Rahman F."/>
            <person name="Altweijri I."/>
            <person name="Alsaleh M."/>
            <person name="Abdullah S.M."/>
            <person name="Al-Owain M."/>
            <person name="Hashem M."/>
            <person name="Houlden H."/>
            <person name="Alkuraya F.S."/>
            <person name="Sips P."/>
            <person name="Sengle G."/>
            <person name="Callewaert B."/>
        </authorList>
    </citation>
    <scope>INVOLVEMENT IN ARCL2E</scope>
    <scope>VARIANTS ARCL2E 448-GLN--GLU-1721 DEL AND 1477-CYS--GLU-1721 DEL</scope>
    <scope>CHARACTERIZATION OF VARIANTS ARCL2E 448-GLN--GLU-1721 DEL AND 1477-CYS--GLU-1721 DEL</scope>
    <scope>INTERACTION WITH FBN1 AND FBN2</scope>
</reference>
<organism>
    <name type="scientific">Homo sapiens</name>
    <name type="common">Human</name>
    <dbReference type="NCBI Taxonomy" id="9606"/>
    <lineage>
        <taxon>Eukaryota</taxon>
        <taxon>Metazoa</taxon>
        <taxon>Chordata</taxon>
        <taxon>Craniata</taxon>
        <taxon>Vertebrata</taxon>
        <taxon>Euteleostomi</taxon>
        <taxon>Mammalia</taxon>
        <taxon>Eutheria</taxon>
        <taxon>Euarchontoglires</taxon>
        <taxon>Primates</taxon>
        <taxon>Haplorrhini</taxon>
        <taxon>Catarrhini</taxon>
        <taxon>Hominidae</taxon>
        <taxon>Homo</taxon>
    </lineage>
</organism>
<evidence type="ECO:0000250" key="1">
    <source>
        <dbReference type="UniProtKB" id="Q8CG19"/>
    </source>
</evidence>
<evidence type="ECO:0000255" key="2"/>
<evidence type="ECO:0000255" key="3">
    <source>
        <dbReference type="PROSITE-ProRule" id="PRU00076"/>
    </source>
</evidence>
<evidence type="ECO:0000255" key="4">
    <source>
        <dbReference type="PROSITE-ProRule" id="PRU00697"/>
    </source>
</evidence>
<evidence type="ECO:0000256" key="5">
    <source>
        <dbReference type="SAM" id="MobiDB-lite"/>
    </source>
</evidence>
<evidence type="ECO:0000269" key="6">
    <source>
    </source>
</evidence>
<evidence type="ECO:0000269" key="7">
    <source>
    </source>
</evidence>
<evidence type="ECO:0000269" key="8">
    <source>
    </source>
</evidence>
<evidence type="ECO:0000269" key="9">
    <source>
    </source>
</evidence>
<evidence type="ECO:0000269" key="10">
    <source>
    </source>
</evidence>
<evidence type="ECO:0000269" key="11">
    <source>
    </source>
</evidence>
<evidence type="ECO:0000269" key="12">
    <source>
    </source>
</evidence>
<evidence type="ECO:0000269" key="13">
    <source>
    </source>
</evidence>
<evidence type="ECO:0000269" key="14">
    <source>
    </source>
</evidence>
<evidence type="ECO:0000269" key="15">
    <source>
    </source>
</evidence>
<evidence type="ECO:0000269" key="16">
    <source>
    </source>
</evidence>
<evidence type="ECO:0000269" key="17">
    <source>
    </source>
</evidence>
<evidence type="ECO:0000269" key="18">
    <source>
    </source>
</evidence>
<evidence type="ECO:0000269" key="19">
    <source>
    </source>
</evidence>
<evidence type="ECO:0000269" key="20">
    <source>
    </source>
</evidence>
<evidence type="ECO:0000269" key="21">
    <source>
    </source>
</evidence>
<evidence type="ECO:0000269" key="22">
    <source>
    </source>
</evidence>
<evidence type="ECO:0000269" key="23">
    <source>
    </source>
</evidence>
<evidence type="ECO:0000303" key="24">
    <source>
    </source>
</evidence>
<evidence type="ECO:0000303" key="25">
    <source>
    </source>
</evidence>
<evidence type="ECO:0000303" key="26">
    <source>
    </source>
</evidence>
<evidence type="ECO:0000303" key="27">
    <source ref="2"/>
</evidence>
<evidence type="ECO:0000303" key="28">
    <source ref="3"/>
</evidence>
<evidence type="ECO:0000303" key="29">
    <source ref="8"/>
</evidence>
<evidence type="ECO:0000305" key="30"/>
<evidence type="ECO:0000305" key="31">
    <source>
    </source>
</evidence>
<evidence type="ECO:0000312" key="32">
    <source>
        <dbReference type="HGNC" id="HGNC:6714"/>
    </source>
</evidence>
<evidence type="ECO:0007744" key="33">
    <source>
    </source>
</evidence>
<evidence type="ECO:0007829" key="34">
    <source>
        <dbReference type="PDB" id="1KSQ"/>
    </source>
</evidence>
<name>LTBP1_HUMAN</name>
<accession>Q14766</accession>
<accession>A1L3V1</accession>
<accession>P22064</accession>
<accession>Q53SD8</accession>
<accession>Q53SF3</accession>
<accession>Q53SG1</accession>
<accession>Q59HF7</accession>
<accession>Q8TD95</accession>
<feature type="signal peptide" evidence="2">
    <location>
        <begin position="1"/>
        <end position="23"/>
    </location>
</feature>
<feature type="chain" id="PRO_0000007635" description="Latent-transforming growth factor beta-binding protein 1">
    <location>
        <begin position="24"/>
        <end position="1721"/>
    </location>
</feature>
<feature type="domain" description="EGF-like 1" evidence="3">
    <location>
        <begin position="187"/>
        <end position="219"/>
    </location>
</feature>
<feature type="domain" description="EGF-like 2" evidence="3">
    <location>
        <begin position="399"/>
        <end position="431"/>
    </location>
</feature>
<feature type="domain" description="TB 1" evidence="4">
    <location>
        <begin position="557"/>
        <end position="609"/>
    </location>
</feature>
<feature type="domain" description="EGF-like 3; calcium-binding" evidence="3">
    <location>
        <begin position="626"/>
        <end position="663"/>
    </location>
</feature>
<feature type="domain" description="TB 2" evidence="4">
    <location>
        <begin position="677"/>
        <end position="729"/>
    </location>
</feature>
<feature type="domain" description="EGF-like 4; calcium-binding" evidence="3">
    <location>
        <begin position="873"/>
        <end position="910"/>
    </location>
</feature>
<feature type="domain" description="EGF-like 5; calcium-binding" evidence="3">
    <location>
        <begin position="915"/>
        <end position="956"/>
    </location>
</feature>
<feature type="domain" description="EGF-like 6; calcium-binding" evidence="3">
    <location>
        <begin position="957"/>
        <end position="997"/>
    </location>
</feature>
<feature type="domain" description="EGF-like 7; calcium-binding" evidence="3">
    <location>
        <begin position="998"/>
        <end position="1037"/>
    </location>
</feature>
<feature type="domain" description="EGF-like 8; calcium-binding" evidence="3">
    <location>
        <begin position="1038"/>
        <end position="1078"/>
    </location>
</feature>
<feature type="domain" description="EGF-like 9; calcium-binding" evidence="3">
    <location>
        <begin position="1079"/>
        <end position="1119"/>
    </location>
</feature>
<feature type="domain" description="EGF-like 10; calcium-binding" evidence="3">
    <location>
        <begin position="1120"/>
        <end position="1160"/>
    </location>
</feature>
<feature type="domain" description="EGF-like 11; calcium-binding" evidence="3">
    <location>
        <begin position="1161"/>
        <end position="1201"/>
    </location>
</feature>
<feature type="domain" description="EGF-like 12; calcium-binding" evidence="3">
    <location>
        <begin position="1202"/>
        <end position="1243"/>
    </location>
</feature>
<feature type="domain" description="EGF-like 13; calcium-binding" evidence="3">
    <location>
        <begin position="1244"/>
        <end position="1281"/>
    </location>
</feature>
<feature type="domain" description="EGF-like 14; calcium-binding" evidence="3">
    <location>
        <begin position="1286"/>
        <end position="1328"/>
    </location>
</feature>
<feature type="domain" description="TB 3" evidence="4">
    <location>
        <begin position="1347"/>
        <end position="1401"/>
    </location>
</feature>
<feature type="domain" description="EGF-like 15; calcium-binding" evidence="3">
    <location>
        <begin position="1424"/>
        <end position="1466"/>
    </location>
</feature>
<feature type="domain" description="EGF-like 16; calcium-binding" evidence="3">
    <location>
        <begin position="1467"/>
        <end position="1503"/>
    </location>
</feature>
<feature type="domain" description="TB 4" evidence="4">
    <location>
        <begin position="1524"/>
        <end position="1577"/>
    </location>
</feature>
<feature type="domain" description="EGF-like 17" evidence="3">
    <location>
        <begin position="1621"/>
        <end position="1657"/>
    </location>
</feature>
<feature type="domain" description="EGF-like 18; calcium-binding" evidence="3">
    <location>
        <begin position="1662"/>
        <end position="1706"/>
    </location>
</feature>
<feature type="region of interest" description="Disordered" evidence="5">
    <location>
        <begin position="64"/>
        <end position="158"/>
    </location>
</feature>
<feature type="region of interest" description="Disordered" evidence="5">
    <location>
        <begin position="228"/>
        <end position="259"/>
    </location>
</feature>
<feature type="region of interest" description="Disordered" evidence="5">
    <location>
        <begin position="750"/>
        <end position="811"/>
    </location>
</feature>
<feature type="region of interest" description="8-Cys3 region" evidence="22 23">
    <location>
        <begin position="1344"/>
        <end position="1411"/>
    </location>
</feature>
<feature type="region of interest" description="C-terminal domain" evidence="13">
    <location>
        <begin position="1507"/>
        <end position="1721"/>
    </location>
</feature>
<feature type="short sequence motif" description="Cell attachment site" evidence="2">
    <location>
        <begin position="1174"/>
        <end position="1176"/>
    </location>
</feature>
<feature type="compositionally biased region" description="Low complexity" evidence="5">
    <location>
        <begin position="64"/>
        <end position="81"/>
    </location>
</feature>
<feature type="compositionally biased region" description="Pro residues" evidence="5">
    <location>
        <begin position="99"/>
        <end position="111"/>
    </location>
</feature>
<feature type="compositionally biased region" description="Low complexity" evidence="5">
    <location>
        <begin position="112"/>
        <end position="130"/>
    </location>
</feature>
<feature type="modified residue" description="(3R)-3-hydroxyasparagine" evidence="17">
    <location>
        <position position="974"/>
    </location>
</feature>
<feature type="modified residue" description="(3R)-3-hydroxyasparagine" evidence="17">
    <location>
        <position position="1137"/>
    </location>
</feature>
<feature type="modified residue" description="Phosphoserine; by FAM20C" evidence="18">
    <location>
        <position position="1414"/>
    </location>
</feature>
<feature type="modified residue" description="Phosphoserine" evidence="33">
    <location>
        <position position="1597"/>
    </location>
</feature>
<feature type="modified residue" description="Phosphoserine" evidence="1">
    <location>
        <position position="1616"/>
    </location>
</feature>
<feature type="glycosylation site" description="N-linked (GlcNAc...) asparagine" evidence="2">
    <location>
        <position position="347"/>
    </location>
</feature>
<feature type="glycosylation site" description="N-linked (GlcNAc...) asparagine" evidence="2">
    <location>
        <position position="378"/>
    </location>
</feature>
<feature type="glycosylation site" description="N-linked (GlcNAc...) asparagine" evidence="2">
    <location>
        <position position="424"/>
    </location>
</feature>
<feature type="glycosylation site" description="N-linked (GlcNAc...) asparagine" evidence="2">
    <location>
        <position position="620"/>
    </location>
</feature>
<feature type="glycosylation site" description="O-linked (Glc) serine" evidence="21">
    <location>
        <position position="647"/>
    </location>
</feature>
<feature type="glycosylation site" description="O-linked (GalNAc...) threonine" evidence="21">
    <location>
        <position position="769"/>
    </location>
</feature>
<feature type="glycosylation site" description="O-linked (GalNAc...) threonine" evidence="21">
    <location>
        <position position="801"/>
    </location>
</feature>
<feature type="glycosylation site" description="O-linked (Glc) serine" evidence="21">
    <location>
        <position position="937"/>
    </location>
</feature>
<feature type="glycosylation site" description="O-linked (Glc) serine" evidence="21">
    <location>
        <position position="1019"/>
    </location>
</feature>
<feature type="glycosylation site" description="O-linked (Glc) serine" evidence="21">
    <location>
        <position position="1059"/>
    </location>
</feature>
<feature type="glycosylation site" description="O-linked (Glc) serine" evidence="21">
    <location>
        <position position="1141"/>
    </location>
</feature>
<feature type="glycosylation site" description="N-linked (GlcNAc...) asparagine" evidence="2">
    <location>
        <position position="1197"/>
    </location>
</feature>
<feature type="glycosylation site" description="O-linked (Glc) serine" evidence="21">
    <location>
        <position position="1224"/>
    </location>
</feature>
<feature type="glycosylation site" description="N-linked (GlcNAc...) asparagine" evidence="2">
    <location>
        <position position="1250"/>
    </location>
</feature>
<feature type="glycosylation site" id="CAR_000184" description="N-linked (GlcNAc...) asparagine" evidence="6 22">
    <location>
        <position position="1366"/>
    </location>
</feature>
<feature type="glycosylation site" description="O-linked (Glc) serine" evidence="21">
    <location>
        <position position="1488"/>
    </location>
</feature>
<feature type="glycosylation site" description="O-linked (Glc) serine" evidence="21">
    <location>
        <position position="1687"/>
    </location>
</feature>
<feature type="disulfide bond" evidence="3">
    <location>
        <begin position="191"/>
        <end position="201"/>
    </location>
</feature>
<feature type="disulfide bond" evidence="3">
    <location>
        <begin position="195"/>
        <end position="207"/>
    </location>
</feature>
<feature type="disulfide bond" evidence="3">
    <location>
        <begin position="209"/>
        <end position="218"/>
    </location>
</feature>
<feature type="disulfide bond" evidence="3">
    <location>
        <begin position="403"/>
        <end position="413"/>
    </location>
</feature>
<feature type="disulfide bond" evidence="3">
    <location>
        <begin position="407"/>
        <end position="419"/>
    </location>
</feature>
<feature type="disulfide bond" evidence="3">
    <location>
        <begin position="421"/>
        <end position="430"/>
    </location>
</feature>
<feature type="disulfide bond" evidence="4">
    <location>
        <begin position="559"/>
        <end position="581"/>
    </location>
</feature>
<feature type="disulfide bond" evidence="4">
    <location>
        <begin position="568"/>
        <end position="594"/>
    </location>
</feature>
<feature type="disulfide bond" evidence="4">
    <location>
        <begin position="582"/>
        <end position="597"/>
    </location>
</feature>
<feature type="disulfide bond" evidence="3">
    <location>
        <begin position="630"/>
        <end position="641"/>
    </location>
</feature>
<feature type="disulfide bond" evidence="3">
    <location>
        <begin position="636"/>
        <end position="650"/>
    </location>
</feature>
<feature type="disulfide bond" evidence="3">
    <location>
        <begin position="652"/>
        <end position="665"/>
    </location>
</feature>
<feature type="disulfide bond" evidence="4">
    <location>
        <begin position="679"/>
        <end position="702"/>
    </location>
</feature>
<feature type="disulfide bond" evidence="4">
    <location>
        <begin position="689"/>
        <end position="714"/>
    </location>
</feature>
<feature type="disulfide bond" evidence="4">
    <location>
        <begin position="703"/>
        <end position="717"/>
    </location>
</feature>
<feature type="disulfide bond" evidence="4">
    <location>
        <begin position="704"/>
        <end position="729"/>
    </location>
</feature>
<feature type="disulfide bond" evidence="3">
    <location>
        <begin position="877"/>
        <end position="889"/>
    </location>
</feature>
<feature type="disulfide bond" evidence="3">
    <location>
        <begin position="884"/>
        <end position="898"/>
    </location>
</feature>
<feature type="disulfide bond" evidence="3">
    <location>
        <begin position="900"/>
        <end position="913"/>
    </location>
</feature>
<feature type="disulfide bond" evidence="3">
    <location>
        <begin position="919"/>
        <end position="931"/>
    </location>
</feature>
<feature type="disulfide bond" evidence="3">
    <location>
        <begin position="926"/>
        <end position="940"/>
    </location>
</feature>
<feature type="disulfide bond" evidence="3">
    <location>
        <begin position="942"/>
        <end position="955"/>
    </location>
</feature>
<feature type="disulfide bond" evidence="3">
    <location>
        <begin position="961"/>
        <end position="972"/>
    </location>
</feature>
<feature type="disulfide bond" evidence="3">
    <location>
        <begin position="967"/>
        <end position="981"/>
    </location>
</feature>
<feature type="disulfide bond" evidence="3">
    <location>
        <begin position="984"/>
        <end position="996"/>
    </location>
</feature>
<feature type="disulfide bond" evidence="3">
    <location>
        <begin position="1002"/>
        <end position="1013"/>
    </location>
</feature>
<feature type="disulfide bond" evidence="3">
    <location>
        <begin position="1008"/>
        <end position="1022"/>
    </location>
</feature>
<feature type="disulfide bond" evidence="3">
    <location>
        <begin position="1025"/>
        <end position="1036"/>
    </location>
</feature>
<feature type="disulfide bond" evidence="3">
    <location>
        <begin position="1042"/>
        <end position="1053"/>
    </location>
</feature>
<feature type="disulfide bond" evidence="3">
    <location>
        <begin position="1048"/>
        <end position="1062"/>
    </location>
</feature>
<feature type="disulfide bond" evidence="3">
    <location>
        <begin position="1064"/>
        <end position="1077"/>
    </location>
</feature>
<feature type="disulfide bond" evidence="3">
    <location>
        <begin position="1083"/>
        <end position="1094"/>
    </location>
</feature>
<feature type="disulfide bond" evidence="3">
    <location>
        <begin position="1089"/>
        <end position="1103"/>
    </location>
</feature>
<feature type="disulfide bond" evidence="3">
    <location>
        <begin position="1105"/>
        <end position="1118"/>
    </location>
</feature>
<feature type="disulfide bond" evidence="3">
    <location>
        <begin position="1124"/>
        <end position="1135"/>
    </location>
</feature>
<feature type="disulfide bond" evidence="3">
    <location>
        <begin position="1130"/>
        <end position="1144"/>
    </location>
</feature>
<feature type="disulfide bond" evidence="3">
    <location>
        <begin position="1146"/>
        <end position="1159"/>
    </location>
</feature>
<feature type="disulfide bond" evidence="3">
    <location>
        <begin position="1165"/>
        <end position="1177"/>
    </location>
</feature>
<feature type="disulfide bond" evidence="3">
    <location>
        <begin position="1172"/>
        <end position="1186"/>
    </location>
</feature>
<feature type="disulfide bond" evidence="3">
    <location>
        <begin position="1188"/>
        <end position="1200"/>
    </location>
</feature>
<feature type="disulfide bond" evidence="3">
    <location>
        <begin position="1206"/>
        <end position="1218"/>
    </location>
</feature>
<feature type="disulfide bond" evidence="3">
    <location>
        <begin position="1212"/>
        <end position="1227"/>
    </location>
</feature>
<feature type="disulfide bond" evidence="3">
    <location>
        <begin position="1229"/>
        <end position="1242"/>
    </location>
</feature>
<feature type="disulfide bond" evidence="3">
    <location>
        <begin position="1248"/>
        <end position="1260"/>
    </location>
</feature>
<feature type="disulfide bond" evidence="3">
    <location>
        <begin position="1254"/>
        <end position="1269"/>
    </location>
</feature>
<feature type="disulfide bond" evidence="4 9">
    <location>
        <begin position="1349"/>
        <end position="1372"/>
    </location>
</feature>
<feature type="disulfide bond" evidence="4 9">
    <location>
        <begin position="1359"/>
        <end position="1384"/>
    </location>
</feature>
<feature type="disulfide bond" description="Interchain (with C-33 in TGFB1); in linked form" evidence="31">
    <location>
        <position position="1359"/>
    </location>
</feature>
<feature type="disulfide bond" evidence="4 9">
    <location>
        <begin position="1373"/>
        <end position="1389"/>
    </location>
</feature>
<feature type="disulfide bond" evidence="4 9">
    <location>
        <begin position="1374"/>
        <end position="1401"/>
    </location>
</feature>
<feature type="disulfide bond" description="Interchain (with C-33 in TGFB1); in linked form" evidence="31">
    <location>
        <position position="1384"/>
    </location>
</feature>
<feature type="disulfide bond" evidence="3">
    <location>
        <begin position="1471"/>
        <end position="1482"/>
    </location>
</feature>
<feature type="disulfide bond" evidence="3">
    <location>
        <begin position="1477"/>
        <end position="1491"/>
    </location>
</feature>
<feature type="disulfide bond" evidence="4">
    <location>
        <begin position="1526"/>
        <end position="1550"/>
    </location>
</feature>
<feature type="disulfide bond" evidence="4">
    <location>
        <begin position="1536"/>
        <end position="1562"/>
    </location>
</feature>
<feature type="disulfide bond" evidence="4">
    <location>
        <begin position="1551"/>
        <end position="1565"/>
    </location>
</feature>
<feature type="disulfide bond" evidence="4">
    <location>
        <begin position="1552"/>
        <end position="1577"/>
    </location>
</feature>
<feature type="disulfide bond" evidence="3">
    <location>
        <begin position="1625"/>
        <end position="1636"/>
    </location>
</feature>
<feature type="disulfide bond" evidence="3">
    <location>
        <begin position="1631"/>
        <end position="1645"/>
    </location>
</feature>
<feature type="disulfide bond" evidence="3">
    <location>
        <begin position="1666"/>
        <end position="1681"/>
    </location>
</feature>
<feature type="disulfide bond" evidence="3">
    <location>
        <begin position="1676"/>
        <end position="1690"/>
    </location>
</feature>
<feature type="disulfide bond" evidence="3">
    <location>
        <begin position="1692"/>
        <end position="1705"/>
    </location>
</feature>
<feature type="splice variant" id="VSP_036963" description="In isoform Short, isoform 3 and isoform 5." evidence="24 25 27 28 29">
    <location>
        <begin position="1"/>
        <end position="326"/>
    </location>
</feature>
<feature type="splice variant" id="VSP_036964" description="In isoform Short, isoform 3 and isoform 5." evidence="24 25 27 28 29">
    <original>EGSFPLRYVQDQVAAPFQL</original>
    <variation>MDTKLMCLLFFFSLPPLLV</variation>
    <location>
        <begin position="327"/>
        <end position="345"/>
    </location>
</feature>
<feature type="splice variant" id="VSP_036965" description="In isoform 3." evidence="28">
    <location>
        <begin position="724"/>
        <end position="776"/>
    </location>
</feature>
<feature type="splice variant" id="VSP_040125" description="In isoform 4 and isoform 5." evidence="29">
    <original>PV</original>
    <variation>PGI</variation>
    <location>
        <begin position="839"/>
        <end position="840"/>
    </location>
</feature>
<feature type="sequence variant" id="VAR_086071" description="In ARCL2E; loss of interaction with FBN1 and FBN2." evidence="20">
    <location>
        <begin position="448"/>
        <end position="1721"/>
    </location>
</feature>
<feature type="sequence variant" id="VAR_086072" description="In ARCL2E; loss of interaction with FBN1 and FBN2." evidence="20">
    <location>
        <begin position="1477"/>
        <end position="1721"/>
    </location>
</feature>
<feature type="mutagenesis site" description="Abolishes interaction with the Latency-associated peptide chain (LAP) regulatory chain of TGFB1; when associated with 1382-A--A-1385." evidence="11">
    <original>E</original>
    <variation>A</variation>
    <location>
        <position position="1348"/>
    </location>
</feature>
<feature type="mutagenesis site" description="Abolishes N-glycosylation at this site without affecting ability to interact with the Latency-associated peptide chain (LAP) regulatory chain of TGFB1." evidence="22 23">
    <original>N</original>
    <variation>A</variation>
    <variation>Q</variation>
    <location>
        <position position="1366"/>
    </location>
</feature>
<feature type="mutagenesis site" description="Abolishes interaction with the Latency-associated peptide chain (LAP) regulatory chain of TGFB1; when associated with A-1348." evidence="11">
    <original>DNCE</original>
    <variation>ANCA</variation>
    <location>
        <begin position="1382"/>
        <end position="1385"/>
    </location>
</feature>
<feature type="mutagenesis site" description="Loss of binding to TGFB1." evidence="7">
    <original>EIFP</original>
    <variation>DL</variation>
    <location>
        <begin position="1385"/>
        <end position="1388"/>
    </location>
</feature>
<feature type="sequence conflict" description="In Ref. 7; AAA96327." evidence="30" ref="7">
    <original>R</original>
    <variation>AS</variation>
    <location>
        <position position="50"/>
    </location>
</feature>
<feature type="sequence conflict" description="In Ref. 1; AAA61160." evidence="30" ref="1">
    <original>H</original>
    <variation>Y</variation>
    <location>
        <position position="691"/>
    </location>
</feature>
<feature type="sequence conflict" description="In Ref. 8; BP291349." evidence="30" ref="8">
    <original>S</original>
    <variation>P</variation>
    <location>
        <position position="694"/>
    </location>
</feature>
<feature type="sequence conflict" description="In Ref. 1; AAA61160 and 2; AAM03124." evidence="30" ref="1 2">
    <location>
        <position position="710"/>
    </location>
</feature>
<feature type="sequence conflict" description="In Ref. 8; BP291349." evidence="30" ref="8">
    <original>R</original>
    <variation>M</variation>
    <location>
        <position position="744"/>
    </location>
</feature>
<feature type="sequence conflict" description="In Ref. 1; AAA61160 and 2; AAM03124." evidence="30" ref="1 2">
    <original>PGV</original>
    <variation>ARS</variation>
    <location>
        <begin position="792"/>
        <end position="794"/>
    </location>
</feature>
<feature type="sequence conflict" description="In Ref. 1; AAA61160." evidence="30" ref="1">
    <original>T</original>
    <variation>A</variation>
    <location>
        <position position="831"/>
    </location>
</feature>
<feature type="sequence conflict" description="In Ref. 1; AAA61160, 2; AAM03124, 3; BAD92038, 5; EAX00437 and 6; AAI30290." evidence="30" ref="1 2 3 5 6">
    <original>V</original>
    <variation>A</variation>
    <location>
        <position position="1378"/>
    </location>
</feature>
<feature type="sequence conflict" description="In Ref. 1; AAA61160 and 2; AAM03124." evidence="30" ref="1 2">
    <original>F</original>
    <variation>L</variation>
    <location>
        <position position="1648"/>
    </location>
</feature>
<feature type="sequence conflict" description="In Ref. 1; AAA61160." evidence="30" ref="1">
    <original>V</original>
    <variation>F</variation>
    <location>
        <position position="1661"/>
    </location>
</feature>
<feature type="strand" evidence="34">
    <location>
        <begin position="1340"/>
        <end position="1342"/>
    </location>
</feature>
<feature type="strand" evidence="34">
    <location>
        <begin position="1346"/>
        <end position="1353"/>
    </location>
</feature>
<feature type="turn" evidence="34">
    <location>
        <begin position="1355"/>
        <end position="1358"/>
    </location>
</feature>
<feature type="strand" evidence="34">
    <location>
        <begin position="1366"/>
        <end position="1368"/>
    </location>
</feature>
<feature type="helix" evidence="34">
    <location>
        <begin position="1369"/>
        <end position="1374"/>
    </location>
</feature>
<feature type="strand" evidence="34">
    <location>
        <begin position="1378"/>
        <end position="1382"/>
    </location>
</feature>
<feature type="strand" evidence="34">
    <location>
        <begin position="1385"/>
        <end position="1388"/>
    </location>
</feature>
<feature type="strand" evidence="34">
    <location>
        <begin position="1392"/>
        <end position="1394"/>
    </location>
</feature>
<feature type="helix" evidence="34">
    <location>
        <begin position="1395"/>
        <end position="1400"/>
    </location>
</feature>
<feature type="strand" evidence="34">
    <location>
        <begin position="1408"/>
        <end position="1410"/>
    </location>
</feature>
<sequence>MAGAWLRWGLLLWAGLLASSAHGRLRRITYVVHPGPGLAAGALPLSGPPRSRTFNVALNARYSRSSAAAGAPSRASPGVPSERTRRTSKPGGAALQGLRPPPPPPPEPARPAVPGGQLHPNPGGHPAAAPFTKQGRQVVRSKVPQETQSGGGSRLQVHQKQQLQGVNVCGGRCCHGWSKAPGSQRCTKPSCVPPCQNGGMCLRPQLCVCKPGTKGKACETIAAQDTSSPVFGGQSPGAASSWGPPEQAAKHTSSKKADTLPRVSPVAQMTLTLKPKPSVGLPQQIHSQVTPLSSQSVVIHHGQTQEYVLKPKYFPAQKGISGEQSTEGSFPLRYVQDQVAAPFQLSNHTGRIKVVFTPSICKVTCTKGSCQNSCEKGNTTTLISENGHAADTLTATNFRVVICHLPCMNGGQCSSRDKCQCPPNFTGKLCQIPVHGASVPKLYQHSQQPGKALGTHVIHSTHTLPLTVTSQQGVKVKFPPNIVNIHVKHPPEASVQIHQVSRIDGPTGQKTKEAQPGQSQVSYQGLPVQKTQTIHSTYSHQQVIPHVYPVAAKTQLGRCFQETIGSQCGKALPGLSKQEDCCGTVGTSWGFNKCQKCPKKPSYHGYNQMMECLPGYKRVNNTFCQDINECQLQGVCPNGECLNTMGSYRCTCKIGFGPDPTFSSCVPDPPVISEEKGPCYRLVSSGRQCMHPLSVHLTKQLCCCSVGKAWGPHCEKCPLPGTAAFKEICPGGMGYTVSGVHRRRPIHHHVGKGPVFVKPKNTQPVAKSTHPPPLPAKEEPVEALTFSREHGPGVAEPEVATAPPEKEIPSLDQEKTKLEPGQPQLSPGISTIHLHPQFPVVIEKTSPPVPVEVAPEASTSSASQVIAPTQVTEINECTVNPDICGAGHCINLPVRYTCICYEGYRFSEQQRKCVDIDECTQVQHLCSQGRCENTEGSFLCICPAGFMASEEGTNCIDVDECLRPDVCGEGHCVNTVGAFRCEYCDSGYRMTQRGRCEDIDECLNPSTCPDEQCVNSPGSYQCVPCTEGFRGWNGQCLDVDECLEPNVCANGDCSNLEGSYMCSCHKGYTRTPDHKHCRDIDECQQGNLCVNGQCKNTEGSFRCTCGQGYQLSAAKDQCEDIDECQHRHLCAHGQCRNTEGSFQCVCDQGYRASGLGDHCEDINECLEDKSVCQRGDCINTAGSYDCTCPDGFQLDDNKTCQDINECEHPGLCGPQGECLNTEGSFHCVCQQGFSISADGRTCEDIDECVNNTVCDSHGFCDNTAGSFRCLCYQGFQAPQDGQGCVDVNECELLSGVCGEAFCENVEGSFLCVCADENQEYSPMTGQCRSRTSTDLDVDVDQPKEEKKECYYNLNDASLCDNVLAPNVTKQECCCTSGVGWGDNCEIFPCPVLGTAEFTEMCPKGKGFVPAGESSSEAGGENYKDADECLLFGQEICKNGFCLNTRPGYECYCKQGTYYDPVKLQCFDMDECQDPSSCIDGQCVNTEGSYNCFCTHPMVLDASEKRCIRPAESNEQIEETDVYQDLCWEHLSDEYVCSRPLVGKQTTYTECCCLYGEAWGMQCALCPLKDSDDYAQLCNIPVTGRRQPYGRDALVDFSEQYTPEADPYFIQDRFLNSFEELQAEECGILNGCENGRCVRVQEGYTCDCFDGYHLDTAKMTCVDVNECDELNNRMSLCKNAKCINTDGSYKCLCLPGYVPSDKPNYCTPLNTALNLEKDSDLE</sequence>